<keyword id="KW-0067">ATP-binding</keyword>
<keyword id="KW-0195">Cyclin</keyword>
<keyword id="KW-0547">Nucleotide-binding</keyword>
<keyword id="KW-1185">Reference proteome</keyword>
<keyword id="KW-0808">Transferase</keyword>
<keyword id="KW-0833">Ubl conjugation pathway</keyword>
<dbReference type="EC" id="2.3.2.23"/>
<dbReference type="EMBL" id="AY127574">
    <property type="protein sequence ID" value="AAM96887.1"/>
    <property type="molecule type" value="mRNA"/>
</dbReference>
<dbReference type="EMBL" id="DQ027034">
    <property type="protein sequence ID" value="AAY44860.1"/>
    <property type="molecule type" value="mRNA"/>
</dbReference>
<dbReference type="EMBL" id="AC012561">
    <property type="protein sequence ID" value="AAF87880.1"/>
    <property type="status" value="ALT_SEQ"/>
    <property type="molecule type" value="Genomic_DNA"/>
</dbReference>
<dbReference type="EMBL" id="AC079279">
    <property type="protein sequence ID" value="AAG51188.1"/>
    <property type="status" value="ALT_SEQ"/>
    <property type="molecule type" value="Genomic_DNA"/>
</dbReference>
<dbReference type="EMBL" id="CP002684">
    <property type="protein sequence ID" value="AEE32556.1"/>
    <property type="molecule type" value="Genomic_DNA"/>
</dbReference>
<dbReference type="EMBL" id="AK227382">
    <property type="protein sequence ID" value="BAE99389.1"/>
    <property type="molecule type" value="mRNA"/>
</dbReference>
<dbReference type="EMBL" id="AY088923">
    <property type="protein sequence ID" value="AAM67229.1"/>
    <property type="molecule type" value="mRNA"/>
</dbReference>
<dbReference type="EMBL" id="BT005855">
    <property type="protein sequence ID" value="AAO64790.1"/>
    <property type="molecule type" value="mRNA"/>
</dbReference>
<dbReference type="PIR" id="D96541">
    <property type="entry name" value="D96541"/>
</dbReference>
<dbReference type="RefSeq" id="NP_564572.1">
    <property type="nucleotide sequence ID" value="NM_103932.4"/>
</dbReference>
<dbReference type="SMR" id="Q8L7T3"/>
<dbReference type="FunCoup" id="Q8L7T3">
    <property type="interactions" value="2203"/>
</dbReference>
<dbReference type="STRING" id="3702.Q8L7T3"/>
<dbReference type="PaxDb" id="3702-AT1G50490.1"/>
<dbReference type="ProteomicsDB" id="242816"/>
<dbReference type="EnsemblPlants" id="AT1G50490.1">
    <property type="protein sequence ID" value="AT1G50490.1"/>
    <property type="gene ID" value="AT1G50490"/>
</dbReference>
<dbReference type="GeneID" id="841471"/>
<dbReference type="Gramene" id="AT1G50490.1">
    <property type="protein sequence ID" value="AT1G50490.1"/>
    <property type="gene ID" value="AT1G50490"/>
</dbReference>
<dbReference type="KEGG" id="ath:AT1G50490"/>
<dbReference type="Araport" id="AT1G50490"/>
<dbReference type="TAIR" id="AT1G50490">
    <property type="gene designation" value="UBC20"/>
</dbReference>
<dbReference type="eggNOG" id="KOG0421">
    <property type="taxonomic scope" value="Eukaryota"/>
</dbReference>
<dbReference type="HOGENOM" id="CLU_030988_9_2_1"/>
<dbReference type="InParanoid" id="Q8L7T3"/>
<dbReference type="OMA" id="DTQGNTC"/>
<dbReference type="OrthoDB" id="10253686at2759"/>
<dbReference type="PhylomeDB" id="Q8L7T3"/>
<dbReference type="UniPathway" id="UPA00143"/>
<dbReference type="PRO" id="PR:Q8L7T3"/>
<dbReference type="Proteomes" id="UP000006548">
    <property type="component" value="Chromosome 1"/>
</dbReference>
<dbReference type="ExpressionAtlas" id="Q8L7T3">
    <property type="expression patterns" value="baseline and differential"/>
</dbReference>
<dbReference type="GO" id="GO:0005524">
    <property type="term" value="F:ATP binding"/>
    <property type="evidence" value="ECO:0007669"/>
    <property type="project" value="UniProtKB-KW"/>
</dbReference>
<dbReference type="GO" id="GO:0061631">
    <property type="term" value="F:ubiquitin conjugating enzyme activity"/>
    <property type="evidence" value="ECO:0007669"/>
    <property type="project" value="UniProtKB-EC"/>
</dbReference>
<dbReference type="GO" id="GO:0004842">
    <property type="term" value="F:ubiquitin-protein transferase activity"/>
    <property type="evidence" value="ECO:0000250"/>
    <property type="project" value="TAIR"/>
</dbReference>
<dbReference type="GO" id="GO:0016567">
    <property type="term" value="P:protein ubiquitination"/>
    <property type="evidence" value="ECO:0007669"/>
    <property type="project" value="UniProtKB-UniPathway"/>
</dbReference>
<dbReference type="CDD" id="cd23791">
    <property type="entry name" value="UBCc_UBE2C"/>
    <property type="match status" value="1"/>
</dbReference>
<dbReference type="FunFam" id="3.10.110.10:FF:000047">
    <property type="entry name" value="ubiquitin-conjugating enzyme E2 20"/>
    <property type="match status" value="1"/>
</dbReference>
<dbReference type="Gene3D" id="3.10.110.10">
    <property type="entry name" value="Ubiquitin Conjugating Enzyme"/>
    <property type="match status" value="1"/>
</dbReference>
<dbReference type="InterPro" id="IPR050113">
    <property type="entry name" value="Ub_conjugating_enzyme"/>
</dbReference>
<dbReference type="InterPro" id="IPR000608">
    <property type="entry name" value="UBQ-conjugat_E2_core"/>
</dbReference>
<dbReference type="InterPro" id="IPR023313">
    <property type="entry name" value="UBQ-conjugating_AS"/>
</dbReference>
<dbReference type="InterPro" id="IPR016135">
    <property type="entry name" value="UBQ-conjugating_enzyme/RWD"/>
</dbReference>
<dbReference type="PANTHER" id="PTHR24067">
    <property type="entry name" value="UBIQUITIN-CONJUGATING ENZYME E2"/>
    <property type="match status" value="1"/>
</dbReference>
<dbReference type="Pfam" id="PF00179">
    <property type="entry name" value="UQ_con"/>
    <property type="match status" value="1"/>
</dbReference>
<dbReference type="SMART" id="SM00212">
    <property type="entry name" value="UBCc"/>
    <property type="match status" value="1"/>
</dbReference>
<dbReference type="SUPFAM" id="SSF54495">
    <property type="entry name" value="UBC-like"/>
    <property type="match status" value="1"/>
</dbReference>
<dbReference type="PROSITE" id="PS00183">
    <property type="entry name" value="UBC_1"/>
    <property type="match status" value="1"/>
</dbReference>
<dbReference type="PROSITE" id="PS50127">
    <property type="entry name" value="UBC_2"/>
    <property type="match status" value="1"/>
</dbReference>
<proteinExistence type="evidence at transcript level"/>
<protein>
    <recommendedName>
        <fullName>Ubiquitin-conjugating enzyme E2 20</fullName>
        <ecNumber>2.3.2.23</ecNumber>
    </recommendedName>
    <alternativeName>
        <fullName>E2 ubiquitin-conjugating enzyme 20</fullName>
    </alternativeName>
    <alternativeName>
        <fullName>Ubiquitin carrier protein 20</fullName>
    </alternativeName>
</protein>
<evidence type="ECO:0000255" key="1">
    <source>
        <dbReference type="PROSITE-ProRule" id="PRU00388"/>
    </source>
</evidence>
<evidence type="ECO:0000255" key="2">
    <source>
        <dbReference type="PROSITE-ProRule" id="PRU10133"/>
    </source>
</evidence>
<evidence type="ECO:0000256" key="3">
    <source>
        <dbReference type="SAM" id="MobiDB-lite"/>
    </source>
</evidence>
<evidence type="ECO:0000269" key="4">
    <source>
    </source>
</evidence>
<evidence type="ECO:0000269" key="5">
    <source>
    </source>
</evidence>
<evidence type="ECO:0000269" key="6">
    <source>
    </source>
</evidence>
<evidence type="ECO:0000305" key="7"/>
<comment type="function">
    <text evidence="4 6">Accepts the ubiquitin from the E1 complex and catalyzes its covalent attachment to other proteins.</text>
</comment>
<comment type="catalytic activity">
    <reaction evidence="1 2">
        <text>S-ubiquitinyl-[E1 ubiquitin-activating enzyme]-L-cysteine + [E2 ubiquitin-conjugating enzyme]-L-cysteine = [E1 ubiquitin-activating enzyme]-L-cysteine + S-ubiquitinyl-[E2 ubiquitin-conjugating enzyme]-L-cysteine.</text>
        <dbReference type="EC" id="2.3.2.23"/>
    </reaction>
</comment>
<comment type="pathway">
    <text evidence="1">Protein modification; protein ubiquitination.</text>
</comment>
<comment type="tissue specificity">
    <text evidence="4 6">Expressed in all tissues with cell division activities and in mature leaves.</text>
</comment>
<comment type="developmental stage">
    <text evidence="5">Expressed during the G2-M phases of the cell cycle.</text>
</comment>
<comment type="induction">
    <text evidence="6">By the herbicide isoxaben and by biotic stresses.</text>
</comment>
<comment type="similarity">
    <text evidence="1">Belongs to the ubiquitin-conjugating enzyme family.</text>
</comment>
<comment type="sequence caution" evidence="7">
    <conflict type="erroneous gene model prediction">
        <sequence resource="EMBL-CDS" id="AAF87880"/>
    </conflict>
</comment>
<comment type="sequence caution" evidence="7">
    <conflict type="erroneous gene model prediction">
        <sequence resource="EMBL-CDS" id="AAG51188"/>
    </conflict>
</comment>
<accession>Q8L7T3</accession>
<accession>Q8L8L3</accession>
<accession>Q9C6Q4</accession>
<accession>Q9LPS2</accession>
<reference key="1">
    <citation type="journal article" date="2002" name="Plant Physiol.">
        <title>Molecular characterization of plant ubiquitin-conjugating enzymes belonging to the UbcP4/E2-C/UBCx/UbcH10 gene family.</title>
        <authorList>
            <person name="Criqui M.C."/>
            <person name="de Almeida Engler J."/>
            <person name="Camasses A."/>
            <person name="Capron A."/>
            <person name="Parmentier Y."/>
            <person name="Inze D."/>
            <person name="Genschik P."/>
        </authorList>
    </citation>
    <scope>NUCLEOTIDE SEQUENCE [MRNA]</scope>
    <scope>FUNCTION</scope>
    <scope>TISSUE SPECIFICITY</scope>
</reference>
<reference key="2">
    <citation type="journal article" date="2005" name="Plant Physiol.">
        <title>Genome analysis and functional characterization of the E2 and RING-type E3 ligase ubiquitination enzymes of Arabidopsis.</title>
        <authorList>
            <person name="Kraft E."/>
            <person name="Stone S.L."/>
            <person name="Ma L."/>
            <person name="Su N."/>
            <person name="Gao Y."/>
            <person name="Lau O.-S."/>
            <person name="Deng X.-W."/>
            <person name="Callis J."/>
        </authorList>
    </citation>
    <scope>NUCLEOTIDE SEQUENCE [MRNA]</scope>
    <scope>FUNCTION</scope>
    <scope>TISSUE SPECIFICITY</scope>
    <scope>INDUCTION</scope>
    <scope>GENE FAMILY</scope>
    <scope>NOMENCLATURE</scope>
</reference>
<reference key="3">
    <citation type="journal article" date="2000" name="Nature">
        <title>Sequence and analysis of chromosome 1 of the plant Arabidopsis thaliana.</title>
        <authorList>
            <person name="Theologis A."/>
            <person name="Ecker J.R."/>
            <person name="Palm C.J."/>
            <person name="Federspiel N.A."/>
            <person name="Kaul S."/>
            <person name="White O."/>
            <person name="Alonso J."/>
            <person name="Altafi H."/>
            <person name="Araujo R."/>
            <person name="Bowman C.L."/>
            <person name="Brooks S.Y."/>
            <person name="Buehler E."/>
            <person name="Chan A."/>
            <person name="Chao Q."/>
            <person name="Chen H."/>
            <person name="Cheuk R.F."/>
            <person name="Chin C.W."/>
            <person name="Chung M.K."/>
            <person name="Conn L."/>
            <person name="Conway A.B."/>
            <person name="Conway A.R."/>
            <person name="Creasy T.H."/>
            <person name="Dewar K."/>
            <person name="Dunn P."/>
            <person name="Etgu P."/>
            <person name="Feldblyum T.V."/>
            <person name="Feng J.-D."/>
            <person name="Fong B."/>
            <person name="Fujii C.Y."/>
            <person name="Gill J.E."/>
            <person name="Goldsmith A.D."/>
            <person name="Haas B."/>
            <person name="Hansen N.F."/>
            <person name="Hughes B."/>
            <person name="Huizar L."/>
            <person name="Hunter J.L."/>
            <person name="Jenkins J."/>
            <person name="Johnson-Hopson C."/>
            <person name="Khan S."/>
            <person name="Khaykin E."/>
            <person name="Kim C.J."/>
            <person name="Koo H.L."/>
            <person name="Kremenetskaia I."/>
            <person name="Kurtz D.B."/>
            <person name="Kwan A."/>
            <person name="Lam B."/>
            <person name="Langin-Hooper S."/>
            <person name="Lee A."/>
            <person name="Lee J.M."/>
            <person name="Lenz C.A."/>
            <person name="Li J.H."/>
            <person name="Li Y.-P."/>
            <person name="Lin X."/>
            <person name="Liu S.X."/>
            <person name="Liu Z.A."/>
            <person name="Luros J.S."/>
            <person name="Maiti R."/>
            <person name="Marziali A."/>
            <person name="Militscher J."/>
            <person name="Miranda M."/>
            <person name="Nguyen M."/>
            <person name="Nierman W.C."/>
            <person name="Osborne B.I."/>
            <person name="Pai G."/>
            <person name="Peterson J."/>
            <person name="Pham P.K."/>
            <person name="Rizzo M."/>
            <person name="Rooney T."/>
            <person name="Rowley D."/>
            <person name="Sakano H."/>
            <person name="Salzberg S.L."/>
            <person name="Schwartz J.R."/>
            <person name="Shinn P."/>
            <person name="Southwick A.M."/>
            <person name="Sun H."/>
            <person name="Tallon L.J."/>
            <person name="Tambunga G."/>
            <person name="Toriumi M.J."/>
            <person name="Town C.D."/>
            <person name="Utterback T."/>
            <person name="Van Aken S."/>
            <person name="Vaysberg M."/>
            <person name="Vysotskaia V.S."/>
            <person name="Walker M."/>
            <person name="Wu D."/>
            <person name="Yu G."/>
            <person name="Fraser C.M."/>
            <person name="Venter J.C."/>
            <person name="Davis R.W."/>
        </authorList>
    </citation>
    <scope>NUCLEOTIDE SEQUENCE [LARGE SCALE GENOMIC DNA]</scope>
    <source>
        <strain>cv. Columbia</strain>
    </source>
</reference>
<reference key="4">
    <citation type="journal article" date="2017" name="Plant J.">
        <title>Araport11: a complete reannotation of the Arabidopsis thaliana reference genome.</title>
        <authorList>
            <person name="Cheng C.Y."/>
            <person name="Krishnakumar V."/>
            <person name="Chan A.P."/>
            <person name="Thibaud-Nissen F."/>
            <person name="Schobel S."/>
            <person name="Town C.D."/>
        </authorList>
    </citation>
    <scope>GENOME REANNOTATION</scope>
    <source>
        <strain>cv. Columbia</strain>
    </source>
</reference>
<reference key="5">
    <citation type="journal article" date="2003" name="Science">
        <title>Empirical analysis of transcriptional activity in the Arabidopsis genome.</title>
        <authorList>
            <person name="Yamada K."/>
            <person name="Lim J."/>
            <person name="Dale J.M."/>
            <person name="Chen H."/>
            <person name="Shinn P."/>
            <person name="Palm C.J."/>
            <person name="Southwick A.M."/>
            <person name="Wu H.C."/>
            <person name="Kim C.J."/>
            <person name="Nguyen M."/>
            <person name="Pham P.K."/>
            <person name="Cheuk R.F."/>
            <person name="Karlin-Newmann G."/>
            <person name="Liu S.X."/>
            <person name="Lam B."/>
            <person name="Sakano H."/>
            <person name="Wu T."/>
            <person name="Yu G."/>
            <person name="Miranda M."/>
            <person name="Quach H.L."/>
            <person name="Tripp M."/>
            <person name="Chang C.H."/>
            <person name="Lee J.M."/>
            <person name="Toriumi M.J."/>
            <person name="Chan M.M."/>
            <person name="Tang C.C."/>
            <person name="Onodera C.S."/>
            <person name="Deng J.M."/>
            <person name="Akiyama K."/>
            <person name="Ansari Y."/>
            <person name="Arakawa T."/>
            <person name="Banh J."/>
            <person name="Banno F."/>
            <person name="Bowser L."/>
            <person name="Brooks S.Y."/>
            <person name="Carninci P."/>
            <person name="Chao Q."/>
            <person name="Choy N."/>
            <person name="Enju A."/>
            <person name="Goldsmith A.D."/>
            <person name="Gurjal M."/>
            <person name="Hansen N.F."/>
            <person name="Hayashizaki Y."/>
            <person name="Johnson-Hopson C."/>
            <person name="Hsuan V.W."/>
            <person name="Iida K."/>
            <person name="Karnes M."/>
            <person name="Khan S."/>
            <person name="Koesema E."/>
            <person name="Ishida J."/>
            <person name="Jiang P.X."/>
            <person name="Jones T."/>
            <person name="Kawai J."/>
            <person name="Kamiya A."/>
            <person name="Meyers C."/>
            <person name="Nakajima M."/>
            <person name="Narusaka M."/>
            <person name="Seki M."/>
            <person name="Sakurai T."/>
            <person name="Satou M."/>
            <person name="Tamse R."/>
            <person name="Vaysberg M."/>
            <person name="Wallender E.K."/>
            <person name="Wong C."/>
            <person name="Yamamura Y."/>
            <person name="Yuan S."/>
            <person name="Shinozaki K."/>
            <person name="Davis R.W."/>
            <person name="Theologis A."/>
            <person name="Ecker J.R."/>
        </authorList>
    </citation>
    <scope>NUCLEOTIDE SEQUENCE [LARGE SCALE MRNA]</scope>
    <source>
        <strain>cv. Columbia</strain>
    </source>
</reference>
<reference key="6">
    <citation type="submission" date="2002-03" db="EMBL/GenBank/DDBJ databases">
        <title>Full-length cDNA from Arabidopsis thaliana.</title>
        <authorList>
            <person name="Brover V.V."/>
            <person name="Troukhan M.E."/>
            <person name="Alexandrov N.A."/>
            <person name="Lu Y.-P."/>
            <person name="Flavell R.B."/>
            <person name="Feldmann K.A."/>
        </authorList>
    </citation>
    <scope>NUCLEOTIDE SEQUENCE [LARGE SCALE MRNA]</scope>
</reference>
<reference key="7">
    <citation type="submission" date="2006-07" db="EMBL/GenBank/DDBJ databases">
        <title>Large-scale analysis of RIKEN Arabidopsis full-length (RAFL) cDNAs.</title>
        <authorList>
            <person name="Totoki Y."/>
            <person name="Seki M."/>
            <person name="Ishida J."/>
            <person name="Nakajima M."/>
            <person name="Enju A."/>
            <person name="Kamiya A."/>
            <person name="Narusaka M."/>
            <person name="Shin-i T."/>
            <person name="Nakagawa M."/>
            <person name="Sakamoto N."/>
            <person name="Oishi K."/>
            <person name="Kohara Y."/>
            <person name="Kobayashi M."/>
            <person name="Toyoda A."/>
            <person name="Sakaki Y."/>
            <person name="Sakurai T."/>
            <person name="Iida K."/>
            <person name="Akiyama K."/>
            <person name="Satou M."/>
            <person name="Toyoda T."/>
            <person name="Konagaya A."/>
            <person name="Carninci P."/>
            <person name="Kawai J."/>
            <person name="Hayashizaki Y."/>
            <person name="Shinozaki K."/>
        </authorList>
    </citation>
    <scope>NUCLEOTIDE SEQUENCE [LARGE SCALE MRNA]</scope>
    <source>
        <strain>cv. Columbia</strain>
    </source>
</reference>
<reference key="8">
    <citation type="journal article" date="2005" name="Cell Cycle">
        <title>Arabidopsis anaphase-promoting complexes: multiple activators and wide range of substrates might keep APC perpetually busy.</title>
        <authorList>
            <person name="Fueloep K."/>
            <person name="Tarayre S."/>
            <person name="Kelemen Z."/>
            <person name="Horvath G."/>
            <person name="Kevei Z."/>
            <person name="Nikovics K."/>
            <person name="Bako L."/>
            <person name="Brown S."/>
            <person name="Kondorosi A."/>
            <person name="Kondorosi E."/>
        </authorList>
    </citation>
    <scope>DEVELOPMENTAL STAGE</scope>
</reference>
<feature type="chain" id="PRO_0000345186" description="Ubiquitin-conjugating enzyme E2 20">
    <location>
        <begin position="1"/>
        <end position="180"/>
    </location>
</feature>
<feature type="domain" description="UBC core" evidence="1">
    <location>
        <begin position="35"/>
        <end position="180"/>
    </location>
</feature>
<feature type="region of interest" description="Disordered" evidence="3">
    <location>
        <begin position="1"/>
        <end position="33"/>
    </location>
</feature>
<feature type="active site" description="Glycyl thioester intermediate" evidence="1 2">
    <location>
        <position position="119"/>
    </location>
</feature>
<feature type="sequence conflict" description="In Ref. 6; AAM67229." evidence="7" ref="6">
    <original>T</original>
    <variation>I</variation>
    <location>
        <position position="72"/>
    </location>
</feature>
<organism>
    <name type="scientific">Arabidopsis thaliana</name>
    <name type="common">Mouse-ear cress</name>
    <dbReference type="NCBI Taxonomy" id="3702"/>
    <lineage>
        <taxon>Eukaryota</taxon>
        <taxon>Viridiplantae</taxon>
        <taxon>Streptophyta</taxon>
        <taxon>Embryophyta</taxon>
        <taxon>Tracheophyta</taxon>
        <taxon>Spermatophyta</taxon>
        <taxon>Magnoliopsida</taxon>
        <taxon>eudicotyledons</taxon>
        <taxon>Gunneridae</taxon>
        <taxon>Pentapetalae</taxon>
        <taxon>rosids</taxon>
        <taxon>malvids</taxon>
        <taxon>Brassicales</taxon>
        <taxon>Brassicaceae</taxon>
        <taxon>Camelineae</taxon>
        <taxon>Arabidopsis</taxon>
    </lineage>
</organism>
<gene>
    <name type="primary">UBC20</name>
    <name type="ordered locus">At1g50490</name>
    <name type="ORF">F11F12.16</name>
    <name type="ORF">F17J6.3</name>
</gene>
<sequence length="180" mass="19792">MAAVNGYQGNTPADPPASNGSKQPAAPTKTVDSQSVLKRLQSELMGLMMGGGPGISAFPEEDNIFCWKGTITGSKDTVFEGTEYRLSLSFSNDYPFKPPKVKFETCCFHPNVDVYGNICLDILQDKWSSAYDVRTILLSIQSLLGEPNISSPLNTQAAQLWSNQEEYRKMVEKLYKPPSA</sequence>
<name>UBC20_ARATH</name>